<sequence>MLQSIPALPVGDIKKSIGFYCDKLGFTLVHHEDGFAVLMCNEVRIHLWEASDEGWRSRSNDSPVCTGAESFIAGTASCRIEVEGIDELYQHIKPLGILHPNTSLKDQWWDERDFAVIDPDNNLISFFQQIKS</sequence>
<name>BLE_STAAN</name>
<reference key="1">
    <citation type="journal article" date="1999" name="Antimicrob. Agents Chemother.">
        <title>Cloning and nucleotide sequence determination of the entire mec DNA of pre-methicillin-resistant Staphylococcus aureus N315.</title>
        <authorList>
            <person name="Ito T."/>
            <person name="Katayama Y."/>
            <person name="Hiramatsu K."/>
        </authorList>
    </citation>
    <scope>NUCLEOTIDE SEQUENCE [GENOMIC DNA]</scope>
</reference>
<reference key="2">
    <citation type="journal article" date="2001" name="Lancet">
        <title>Whole genome sequencing of meticillin-resistant Staphylococcus aureus.</title>
        <authorList>
            <person name="Kuroda M."/>
            <person name="Ohta T."/>
            <person name="Uchiyama I."/>
            <person name="Baba T."/>
            <person name="Yuzawa H."/>
            <person name="Kobayashi I."/>
            <person name="Cui L."/>
            <person name="Oguchi A."/>
            <person name="Aoki K."/>
            <person name="Nagai Y."/>
            <person name="Lian J.-Q."/>
            <person name="Ito T."/>
            <person name="Kanamori M."/>
            <person name="Matsumaru H."/>
            <person name="Maruyama A."/>
            <person name="Murakami H."/>
            <person name="Hosoyama A."/>
            <person name="Mizutani-Ui Y."/>
            <person name="Takahashi N.K."/>
            <person name="Sawano T."/>
            <person name="Inoue R."/>
            <person name="Kaito C."/>
            <person name="Sekimizu K."/>
            <person name="Hirakawa H."/>
            <person name="Kuhara S."/>
            <person name="Goto S."/>
            <person name="Yabuzaki J."/>
            <person name="Kanehisa M."/>
            <person name="Yamashita A."/>
            <person name="Oshima K."/>
            <person name="Furuya K."/>
            <person name="Yoshino C."/>
            <person name="Shiba T."/>
            <person name="Hattori M."/>
            <person name="Ogasawara N."/>
            <person name="Hayashi H."/>
            <person name="Hiramatsu K."/>
        </authorList>
    </citation>
    <scope>NUCLEOTIDE SEQUENCE [LARGE SCALE GENOMIC DNA]</scope>
    <source>
        <strain>N315</strain>
    </source>
</reference>
<reference key="3">
    <citation type="submission" date="2005-11" db="UniProtKB">
        <title>Shotgun proteomic analysis of total protein extract of S. aureus S30 versus N315.</title>
        <authorList>
            <person name="Stenz L."/>
        </authorList>
    </citation>
    <scope>IDENTIFICATION BY MASS SPECTROMETRY</scope>
</reference>
<reference key="4">
    <citation type="submission" date="2007-10" db="UniProtKB">
        <title>Shotgun proteomic analysis of total and membrane protein extracts of S. aureus strain N315.</title>
        <authorList>
            <person name="Vaezzadeh A.R."/>
            <person name="Deshusses J."/>
            <person name="Lescuyer P."/>
            <person name="Hochstrasser D.F."/>
        </authorList>
    </citation>
    <scope>IDENTIFICATION BY MASS SPECTROMETRY [LARGE SCALE ANALYSIS]</scope>
    <source>
        <strain>N315</strain>
    </source>
</reference>
<feature type="chain" id="PRO_0000300632" description="Bleomycin resistance protein">
    <location>
        <begin position="1"/>
        <end position="132"/>
    </location>
</feature>
<feature type="domain" description="VOC" evidence="2">
    <location>
        <begin position="1"/>
        <end position="129"/>
    </location>
</feature>
<comment type="function">
    <text evidence="1">Binding protein with a strong affinity to the bleomycin family of antibiotics, which confers resistance to these antibiotics by preventing the bleomycin-induced DNA breakage.</text>
</comment>
<comment type="similarity">
    <text evidence="3">Belongs to the bleomycin resistance protein family.</text>
</comment>
<comment type="sequence caution" evidence="3">
    <conflict type="erroneous initiation">
        <sequence resource="EMBL-CDS" id="BAA82230"/>
    </conflict>
</comment>
<comment type="sequence caution" evidence="3">
    <conflict type="erroneous initiation">
        <sequence resource="EMBL-CDS" id="BAB41250"/>
    </conflict>
</comment>
<keyword id="KW-0046">Antibiotic resistance</keyword>
<gene>
    <name type="primary">ble</name>
    <name type="synonym">bleO</name>
    <name type="ordered locus">SA0032</name>
</gene>
<evidence type="ECO:0000250" key="1"/>
<evidence type="ECO:0000255" key="2">
    <source>
        <dbReference type="PROSITE-ProRule" id="PRU01163"/>
    </source>
</evidence>
<evidence type="ECO:0000305" key="3"/>
<proteinExistence type="evidence at protein level"/>
<accession>Q7A8D1</accession>
<accession>P13014</accession>
<accession>P22491</accession>
<accession>Q79ER2</accession>
<organism>
    <name type="scientific">Staphylococcus aureus (strain N315)</name>
    <dbReference type="NCBI Taxonomy" id="158879"/>
    <lineage>
        <taxon>Bacteria</taxon>
        <taxon>Bacillati</taxon>
        <taxon>Bacillota</taxon>
        <taxon>Bacilli</taxon>
        <taxon>Bacillales</taxon>
        <taxon>Staphylococcaceae</taxon>
        <taxon>Staphylococcus</taxon>
    </lineage>
</organism>
<dbReference type="EMBL" id="D86934">
    <property type="protein sequence ID" value="BAA82230.2"/>
    <property type="status" value="ALT_INIT"/>
    <property type="molecule type" value="Genomic_DNA"/>
</dbReference>
<dbReference type="EMBL" id="BA000018">
    <property type="protein sequence ID" value="BAB41250.1"/>
    <property type="status" value="ALT_INIT"/>
    <property type="molecule type" value="Genomic_DNA"/>
</dbReference>
<dbReference type="PIR" id="A89762">
    <property type="entry name" value="A89762"/>
</dbReference>
<dbReference type="PIR" id="T44128">
    <property type="entry name" value="T44128"/>
</dbReference>
<dbReference type="SMR" id="Q7A8D1"/>
<dbReference type="EnsemblBacteria" id="BAB41250">
    <property type="protein sequence ID" value="BAB41250"/>
    <property type="gene ID" value="BAB41250"/>
</dbReference>
<dbReference type="KEGG" id="sau:SA0032"/>
<dbReference type="HOGENOM" id="CLU_046006_15_5_9"/>
<dbReference type="GO" id="GO:0046677">
    <property type="term" value="P:response to antibiotic"/>
    <property type="evidence" value="ECO:0007669"/>
    <property type="project" value="UniProtKB-KW"/>
</dbReference>
<dbReference type="CDD" id="cd08349">
    <property type="entry name" value="BLMA_like"/>
    <property type="match status" value="1"/>
</dbReference>
<dbReference type="Gene3D" id="3.10.180.10">
    <property type="entry name" value="2,3-Dihydroxybiphenyl 1,2-Dioxygenase, domain 1"/>
    <property type="match status" value="1"/>
</dbReference>
<dbReference type="InterPro" id="IPR000335">
    <property type="entry name" value="Bleomycin-R"/>
</dbReference>
<dbReference type="InterPro" id="IPR029068">
    <property type="entry name" value="Glyas_Bleomycin-R_OHBP_Dase"/>
</dbReference>
<dbReference type="InterPro" id="IPR004360">
    <property type="entry name" value="Glyas_Fos-R_dOase_dom"/>
</dbReference>
<dbReference type="InterPro" id="IPR037523">
    <property type="entry name" value="VOC"/>
</dbReference>
<dbReference type="NCBIfam" id="NF000027">
    <property type="entry name" value="156720500_bleO"/>
    <property type="match status" value="1"/>
</dbReference>
<dbReference type="Pfam" id="PF00903">
    <property type="entry name" value="Glyoxalase"/>
    <property type="match status" value="1"/>
</dbReference>
<dbReference type="PRINTS" id="PR00311">
    <property type="entry name" value="BLEOMYCINRST"/>
</dbReference>
<dbReference type="SUPFAM" id="SSF54593">
    <property type="entry name" value="Glyoxalase/Bleomycin resistance protein/Dihydroxybiphenyl dioxygenase"/>
    <property type="match status" value="1"/>
</dbReference>
<dbReference type="PROSITE" id="PS51819">
    <property type="entry name" value="VOC"/>
    <property type="match status" value="1"/>
</dbReference>
<protein>
    <recommendedName>
        <fullName>Bleomycin resistance protein</fullName>
        <shortName>BRP</shortName>
    </recommendedName>
    <alternativeName>
        <fullName>Bleomycin-binding protein</fullName>
    </alternativeName>
</protein>